<keyword id="KW-0963">Cytoplasm</keyword>
<keyword id="KW-0396">Initiation factor</keyword>
<keyword id="KW-0648">Protein biosynthesis</keyword>
<keyword id="KW-0694">RNA-binding</keyword>
<keyword id="KW-0699">rRNA-binding</keyword>
<reference key="1">
    <citation type="journal article" date="2005" name="Genome Res.">
        <title>The Chlamydophila abortus genome sequence reveals an array of variable proteins that contribute to interspecies variation.</title>
        <authorList>
            <person name="Thomson N.R."/>
            <person name="Yeats C."/>
            <person name="Bell K."/>
            <person name="Holden M.T.G."/>
            <person name="Bentley S.D."/>
            <person name="Livingstone M."/>
            <person name="Cerdeno-Tarraga A.-M."/>
            <person name="Harris B."/>
            <person name="Doggett J."/>
            <person name="Ormond D."/>
            <person name="Mungall K."/>
            <person name="Clarke K."/>
            <person name="Feltwell T."/>
            <person name="Hance Z."/>
            <person name="Sanders M."/>
            <person name="Quail M.A."/>
            <person name="Price C."/>
            <person name="Barrell B.G."/>
            <person name="Parkhill J."/>
            <person name="Longbottom D."/>
        </authorList>
    </citation>
    <scope>NUCLEOTIDE SEQUENCE [LARGE SCALE GENOMIC DNA]</scope>
    <source>
        <strain>DSM 27085 / S26/3</strain>
    </source>
</reference>
<evidence type="ECO:0000255" key="1">
    <source>
        <dbReference type="HAMAP-Rule" id="MF_00075"/>
    </source>
</evidence>
<dbReference type="EMBL" id="CR848038">
    <property type="protein sequence ID" value="CAH64116.1"/>
    <property type="molecule type" value="Genomic_DNA"/>
</dbReference>
<dbReference type="RefSeq" id="WP_011097248.1">
    <property type="nucleotide sequence ID" value="NC_004552.2"/>
</dbReference>
<dbReference type="SMR" id="Q5L5H5"/>
<dbReference type="KEGG" id="cab:CAB669"/>
<dbReference type="eggNOG" id="COG0361">
    <property type="taxonomic scope" value="Bacteria"/>
</dbReference>
<dbReference type="HOGENOM" id="CLU_151267_1_0_0"/>
<dbReference type="OrthoDB" id="9803250at2"/>
<dbReference type="Proteomes" id="UP000001012">
    <property type="component" value="Chromosome"/>
</dbReference>
<dbReference type="GO" id="GO:0005829">
    <property type="term" value="C:cytosol"/>
    <property type="evidence" value="ECO:0007669"/>
    <property type="project" value="TreeGrafter"/>
</dbReference>
<dbReference type="GO" id="GO:0043022">
    <property type="term" value="F:ribosome binding"/>
    <property type="evidence" value="ECO:0007669"/>
    <property type="project" value="UniProtKB-UniRule"/>
</dbReference>
<dbReference type="GO" id="GO:0019843">
    <property type="term" value="F:rRNA binding"/>
    <property type="evidence" value="ECO:0007669"/>
    <property type="project" value="UniProtKB-UniRule"/>
</dbReference>
<dbReference type="GO" id="GO:0003743">
    <property type="term" value="F:translation initiation factor activity"/>
    <property type="evidence" value="ECO:0007669"/>
    <property type="project" value="UniProtKB-UniRule"/>
</dbReference>
<dbReference type="CDD" id="cd04451">
    <property type="entry name" value="S1_IF1"/>
    <property type="match status" value="1"/>
</dbReference>
<dbReference type="FunFam" id="2.40.50.140:FF:000002">
    <property type="entry name" value="Translation initiation factor IF-1"/>
    <property type="match status" value="1"/>
</dbReference>
<dbReference type="Gene3D" id="2.40.50.140">
    <property type="entry name" value="Nucleic acid-binding proteins"/>
    <property type="match status" value="1"/>
</dbReference>
<dbReference type="HAMAP" id="MF_00075">
    <property type="entry name" value="IF_1"/>
    <property type="match status" value="1"/>
</dbReference>
<dbReference type="InterPro" id="IPR012340">
    <property type="entry name" value="NA-bd_OB-fold"/>
</dbReference>
<dbReference type="InterPro" id="IPR006196">
    <property type="entry name" value="RNA-binding_domain_S1_IF1"/>
</dbReference>
<dbReference type="InterPro" id="IPR003029">
    <property type="entry name" value="S1_domain"/>
</dbReference>
<dbReference type="InterPro" id="IPR004368">
    <property type="entry name" value="TIF_IF1"/>
</dbReference>
<dbReference type="NCBIfam" id="TIGR00008">
    <property type="entry name" value="infA"/>
    <property type="match status" value="1"/>
</dbReference>
<dbReference type="PANTHER" id="PTHR33370">
    <property type="entry name" value="TRANSLATION INITIATION FACTOR IF-1, CHLOROPLASTIC"/>
    <property type="match status" value="1"/>
</dbReference>
<dbReference type="PANTHER" id="PTHR33370:SF1">
    <property type="entry name" value="TRANSLATION INITIATION FACTOR IF-1, CHLOROPLASTIC"/>
    <property type="match status" value="1"/>
</dbReference>
<dbReference type="Pfam" id="PF01176">
    <property type="entry name" value="eIF-1a"/>
    <property type="match status" value="1"/>
</dbReference>
<dbReference type="SMART" id="SM00316">
    <property type="entry name" value="S1"/>
    <property type="match status" value="1"/>
</dbReference>
<dbReference type="SUPFAM" id="SSF50249">
    <property type="entry name" value="Nucleic acid-binding proteins"/>
    <property type="match status" value="1"/>
</dbReference>
<dbReference type="PROSITE" id="PS50832">
    <property type="entry name" value="S1_IF1_TYPE"/>
    <property type="match status" value="1"/>
</dbReference>
<organism>
    <name type="scientific">Chlamydia abortus (strain DSM 27085 / S26/3)</name>
    <name type="common">Chlamydophila abortus</name>
    <dbReference type="NCBI Taxonomy" id="218497"/>
    <lineage>
        <taxon>Bacteria</taxon>
        <taxon>Pseudomonadati</taxon>
        <taxon>Chlamydiota</taxon>
        <taxon>Chlamydiia</taxon>
        <taxon>Chlamydiales</taxon>
        <taxon>Chlamydiaceae</taxon>
        <taxon>Chlamydia/Chlamydophila group</taxon>
        <taxon>Chlamydia</taxon>
    </lineage>
</organism>
<proteinExistence type="inferred from homology"/>
<comment type="function">
    <text evidence="1">One of the essential components for the initiation of protein synthesis. Stabilizes the binding of IF-2 and IF-3 on the 30S subunit to which N-formylmethionyl-tRNA(fMet) subsequently binds. Helps modulate mRNA selection, yielding the 30S pre-initiation complex (PIC). Upon addition of the 50S ribosomal subunit IF-1, IF-2 and IF-3 are released leaving the mature 70S translation initiation complex.</text>
</comment>
<comment type="subunit">
    <text evidence="1">Component of the 30S ribosomal translation pre-initiation complex which assembles on the 30S ribosome in the order IF-2 and IF-3, IF-1 and N-formylmethionyl-tRNA(fMet); mRNA recruitment can occur at any time during PIC assembly.</text>
</comment>
<comment type="subcellular location">
    <subcellularLocation>
        <location evidence="1">Cytoplasm</location>
    </subcellularLocation>
</comment>
<comment type="similarity">
    <text evidence="1">Belongs to the IF-1 family.</text>
</comment>
<protein>
    <recommendedName>
        <fullName evidence="1">Translation initiation factor IF-1</fullName>
    </recommendedName>
</protein>
<accession>Q5L5H5</accession>
<gene>
    <name evidence="1" type="primary">infA</name>
    <name type="ordered locus">CAB669</name>
</gene>
<name>IF1_CHLAB</name>
<feature type="chain" id="PRO_0000095767" description="Translation initiation factor IF-1">
    <location>
        <begin position="1"/>
        <end position="73"/>
    </location>
</feature>
<feature type="domain" description="S1-like" evidence="1">
    <location>
        <begin position="1"/>
        <end position="73"/>
    </location>
</feature>
<sequence>MAKKEDTIVLEGRVKELLPGMHFKILLENGMPVTAHLCGKMRMSNIRLLVGDRVTVEMSAYDLTKARVVYRHR</sequence>